<protein>
    <recommendedName>
        <fullName>Large ribosomal subunit protein eL29</fullName>
    </recommendedName>
    <alternativeName>
        <fullName>60S ribosomal protein L29</fullName>
    </alternativeName>
</protein>
<comment type="function">
    <text evidence="3 4">Component of the large ribosomal subunit (PubMed:26245381, PubMed:27863242). The ribosome is a large ribonucleoprotein complex responsible for the synthesis of proteins in the cell (PubMed:26245381, PubMed:27863242).</text>
</comment>
<comment type="subunit">
    <text evidence="3 4 5 6 7 8 9 10 11 12">Component of the large ribosomal subunit.</text>
</comment>
<comment type="subcellular location">
    <subcellularLocation>
        <location evidence="3 4 5 6 7 8 9 10 11 12">Cytoplasm</location>
    </subcellularLocation>
</comment>
<comment type="similarity">
    <text evidence="13">Belongs to the eukaryotic ribosomal protein eL29 family.</text>
</comment>
<gene>
    <name type="primary">RPL29</name>
</gene>
<organism>
    <name type="scientific">Oryctolagus cuniculus</name>
    <name type="common">Rabbit</name>
    <dbReference type="NCBI Taxonomy" id="9986"/>
    <lineage>
        <taxon>Eukaryota</taxon>
        <taxon>Metazoa</taxon>
        <taxon>Chordata</taxon>
        <taxon>Craniata</taxon>
        <taxon>Vertebrata</taxon>
        <taxon>Euteleostomi</taxon>
        <taxon>Mammalia</taxon>
        <taxon>Eutheria</taxon>
        <taxon>Euarchontoglires</taxon>
        <taxon>Glires</taxon>
        <taxon>Lagomorpha</taxon>
        <taxon>Leporidae</taxon>
        <taxon>Oryctolagus</taxon>
    </lineage>
</organism>
<dbReference type="EMBL" id="AAGW02044168">
    <property type="status" value="NOT_ANNOTATED_CDS"/>
    <property type="molecule type" value="Genomic_DNA"/>
</dbReference>
<dbReference type="RefSeq" id="XP_002713279.1">
    <property type="nucleotide sequence ID" value="XM_002713233.5"/>
</dbReference>
<dbReference type="RefSeq" id="XP_051707556.1">
    <property type="nucleotide sequence ID" value="XM_051851596.2"/>
</dbReference>
<dbReference type="PDB" id="3JAG">
    <property type="method" value="EM"/>
    <property type="resolution" value="3.65 A"/>
    <property type="chains" value="b=2-76"/>
</dbReference>
<dbReference type="PDB" id="3JAH">
    <property type="method" value="EM"/>
    <property type="resolution" value="3.45 A"/>
    <property type="chains" value="b=2-76"/>
</dbReference>
<dbReference type="PDB" id="3JAI">
    <property type="method" value="EM"/>
    <property type="resolution" value="3.65 A"/>
    <property type="chains" value="b=2-76"/>
</dbReference>
<dbReference type="PDB" id="5LZS">
    <property type="method" value="EM"/>
    <property type="resolution" value="3.31 A"/>
    <property type="chains" value="b=1-245"/>
</dbReference>
<dbReference type="PDB" id="5LZT">
    <property type="method" value="EM"/>
    <property type="resolution" value="3.65 A"/>
    <property type="chains" value="b=1-245"/>
</dbReference>
<dbReference type="PDB" id="5LZU">
    <property type="method" value="EM"/>
    <property type="resolution" value="3.75 A"/>
    <property type="chains" value="b=1-226"/>
</dbReference>
<dbReference type="PDB" id="5LZV">
    <property type="method" value="EM"/>
    <property type="resolution" value="3.35 A"/>
    <property type="chains" value="b=1-245"/>
</dbReference>
<dbReference type="PDB" id="5LZW">
    <property type="method" value="EM"/>
    <property type="resolution" value="3.53 A"/>
    <property type="chains" value="b=1-245"/>
</dbReference>
<dbReference type="PDB" id="5LZX">
    <property type="method" value="EM"/>
    <property type="resolution" value="3.67 A"/>
    <property type="chains" value="b=1-245"/>
</dbReference>
<dbReference type="PDB" id="5LZY">
    <property type="method" value="EM"/>
    <property type="resolution" value="3.99 A"/>
    <property type="chains" value="b=1-245"/>
</dbReference>
<dbReference type="PDB" id="5LZZ">
    <property type="method" value="EM"/>
    <property type="resolution" value="3.47 A"/>
    <property type="chains" value="b=1-245"/>
</dbReference>
<dbReference type="PDB" id="6D90">
    <property type="method" value="EM"/>
    <property type="resolution" value="3.20 A"/>
    <property type="chains" value="b=1-226"/>
</dbReference>
<dbReference type="PDB" id="6D9J">
    <property type="method" value="EM"/>
    <property type="resolution" value="3.20 A"/>
    <property type="chains" value="b=1-226"/>
</dbReference>
<dbReference type="PDB" id="6FTG">
    <property type="method" value="EM"/>
    <property type="resolution" value="9.10 A"/>
    <property type="chains" value="b=2-76"/>
</dbReference>
<dbReference type="PDB" id="6FTI">
    <property type="method" value="EM"/>
    <property type="resolution" value="4.20 A"/>
    <property type="chains" value="b=2-76"/>
</dbReference>
<dbReference type="PDB" id="6FTJ">
    <property type="method" value="EM"/>
    <property type="resolution" value="4.70 A"/>
    <property type="chains" value="b=2-76"/>
</dbReference>
<dbReference type="PDB" id="6HCF">
    <property type="method" value="EM"/>
    <property type="resolution" value="3.90 A"/>
    <property type="chains" value="b3=1-226"/>
</dbReference>
<dbReference type="PDB" id="6HCJ">
    <property type="method" value="EM"/>
    <property type="resolution" value="3.80 A"/>
    <property type="chains" value="b3=1-245"/>
</dbReference>
<dbReference type="PDB" id="6HCQ">
    <property type="method" value="EM"/>
    <property type="resolution" value="6.50 A"/>
    <property type="chains" value="b3=1-245"/>
</dbReference>
<dbReference type="PDB" id="6P5I">
    <property type="method" value="EM"/>
    <property type="resolution" value="3.10 A"/>
    <property type="chains" value="Ab=1-226"/>
</dbReference>
<dbReference type="PDB" id="6P5J">
    <property type="method" value="EM"/>
    <property type="resolution" value="3.10 A"/>
    <property type="chains" value="Ab=1-226"/>
</dbReference>
<dbReference type="PDB" id="6P5K">
    <property type="method" value="EM"/>
    <property type="resolution" value="3.10 A"/>
    <property type="chains" value="Ab=1-226"/>
</dbReference>
<dbReference type="PDB" id="6P5N">
    <property type="method" value="EM"/>
    <property type="resolution" value="3.20 A"/>
    <property type="chains" value="Ab=1-226"/>
</dbReference>
<dbReference type="PDB" id="6R5Q">
    <property type="method" value="EM"/>
    <property type="resolution" value="3.00 A"/>
    <property type="chains" value="b=2-117"/>
</dbReference>
<dbReference type="PDB" id="6R6G">
    <property type="method" value="EM"/>
    <property type="resolution" value="3.70 A"/>
    <property type="chains" value="b=2-117"/>
</dbReference>
<dbReference type="PDB" id="6R6P">
    <property type="method" value="EM"/>
    <property type="resolution" value="3.10 A"/>
    <property type="chains" value="b=2-76"/>
</dbReference>
<dbReference type="PDB" id="6R7Q">
    <property type="method" value="EM"/>
    <property type="resolution" value="3.90 A"/>
    <property type="chains" value="b=2-117"/>
</dbReference>
<dbReference type="PDB" id="6T59">
    <property type="method" value="EM"/>
    <property type="resolution" value="3.11 A"/>
    <property type="chains" value="b3=1-226"/>
</dbReference>
<dbReference type="PDB" id="6ZVK">
    <property type="method" value="EM"/>
    <property type="resolution" value="3.49 A"/>
    <property type="chains" value="r2=2-76"/>
</dbReference>
<dbReference type="PDB" id="7A01">
    <property type="method" value="EM"/>
    <property type="resolution" value="3.60 A"/>
    <property type="chains" value="r2=2-76"/>
</dbReference>
<dbReference type="PDB" id="7MDZ">
    <property type="method" value="EM"/>
    <property type="resolution" value="3.20 A"/>
    <property type="chains" value="b=1-245"/>
</dbReference>
<dbReference type="PDB" id="7NFX">
    <property type="method" value="EM"/>
    <property type="resolution" value="3.20 A"/>
    <property type="chains" value="b=1-223"/>
</dbReference>
<dbReference type="PDB" id="7NWG">
    <property type="method" value="EM"/>
    <property type="resolution" value="3.80 A"/>
    <property type="chains" value="b3=1-226"/>
</dbReference>
<dbReference type="PDB" id="7NWH">
    <property type="method" value="EM"/>
    <property type="resolution" value="4.10 A"/>
    <property type="chains" value="b=1-226"/>
</dbReference>
<dbReference type="PDB" id="7O7Y">
    <property type="method" value="EM"/>
    <property type="resolution" value="2.20 A"/>
    <property type="chains" value="Bb=1-245"/>
</dbReference>
<dbReference type="PDB" id="7O7Z">
    <property type="method" value="EM"/>
    <property type="resolution" value="2.40 A"/>
    <property type="chains" value="Bb=1-245"/>
</dbReference>
<dbReference type="PDB" id="7O80">
    <property type="method" value="EM"/>
    <property type="resolution" value="2.90 A"/>
    <property type="chains" value="Bb=1-245"/>
</dbReference>
<dbReference type="PDB" id="7O81">
    <property type="method" value="EM"/>
    <property type="resolution" value="3.10 A"/>
    <property type="chains" value="Bb=1-245"/>
</dbReference>
<dbReference type="PDB" id="7OBR">
    <property type="method" value="EM"/>
    <property type="resolution" value="2.80 A"/>
    <property type="chains" value="b=1-223"/>
</dbReference>
<dbReference type="PDB" id="7OYD">
    <property type="method" value="EM"/>
    <property type="resolution" value="2.30 A"/>
    <property type="chains" value="b=1-245"/>
</dbReference>
<dbReference type="PDB" id="7QWQ">
    <property type="method" value="EM"/>
    <property type="resolution" value="2.83 A"/>
    <property type="chains" value="b=1-223"/>
</dbReference>
<dbReference type="PDB" id="7QWR">
    <property type="method" value="EM"/>
    <property type="resolution" value="2.90 A"/>
    <property type="chains" value="b=1-223"/>
</dbReference>
<dbReference type="PDB" id="7QWS">
    <property type="method" value="EM"/>
    <property type="resolution" value="3.40 A"/>
    <property type="chains" value="b=1-223"/>
</dbReference>
<dbReference type="PDB" id="7TM3">
    <property type="method" value="EM"/>
    <property type="resolution" value="3.25 A"/>
    <property type="chains" value="b=1-226"/>
</dbReference>
<dbReference type="PDB" id="7TUT">
    <property type="method" value="EM"/>
    <property type="resolution" value="3.88 A"/>
    <property type="chains" value="b=1-226"/>
</dbReference>
<dbReference type="PDB" id="7UCJ">
    <property type="method" value="EM"/>
    <property type="resolution" value="3.10 A"/>
    <property type="chains" value="b=2-117"/>
</dbReference>
<dbReference type="PDB" id="7UCK">
    <property type="method" value="EM"/>
    <property type="resolution" value="2.80 A"/>
    <property type="chains" value="b=2-117"/>
</dbReference>
<dbReference type="PDB" id="7ZJW">
    <property type="method" value="EM"/>
    <property type="resolution" value="2.80 A"/>
    <property type="chains" value="Le=1-245"/>
</dbReference>
<dbReference type="PDB" id="7ZJX">
    <property type="method" value="EM"/>
    <property type="resolution" value="3.10 A"/>
    <property type="chains" value="Le=1-245"/>
</dbReference>
<dbReference type="PDB" id="8B5L">
    <property type="method" value="EM"/>
    <property type="resolution" value="2.86 A"/>
    <property type="chains" value="b=1-245"/>
</dbReference>
<dbReference type="PDB" id="8B6C">
    <property type="method" value="EM"/>
    <property type="resolution" value="2.79 A"/>
    <property type="chains" value="b=1-245"/>
</dbReference>
<dbReference type="PDB" id="8BHF">
    <property type="method" value="EM"/>
    <property type="resolution" value="3.10 A"/>
    <property type="chains" value="O1=2-117"/>
</dbReference>
<dbReference type="PDB" id="8BPO">
    <property type="method" value="EM"/>
    <property type="resolution" value="2.80 A"/>
    <property type="chains" value="a2=1-226"/>
</dbReference>
<dbReference type="PDB" id="8BTK">
    <property type="method" value="EM"/>
    <property type="resolution" value="3.50 A"/>
    <property type="chains" value="Bb=1-245"/>
</dbReference>
<dbReference type="PDB" id="8P2K">
    <property type="method" value="EM"/>
    <property type="resolution" value="2.90 A"/>
    <property type="chains" value="Bb=1-245"/>
</dbReference>
<dbReference type="PDB" id="8RJB">
    <property type="method" value="EM"/>
    <property type="resolution" value="2.69 A"/>
    <property type="chains" value="b=1-226"/>
</dbReference>
<dbReference type="PDB" id="8RJC">
    <property type="method" value="EM"/>
    <property type="resolution" value="2.90 A"/>
    <property type="chains" value="b=1-226"/>
</dbReference>
<dbReference type="PDB" id="8RJD">
    <property type="method" value="EM"/>
    <property type="resolution" value="2.79 A"/>
    <property type="chains" value="b=1-226"/>
</dbReference>
<dbReference type="PDB" id="8SCB">
    <property type="method" value="EM"/>
    <property type="resolution" value="2.50 A"/>
    <property type="chains" value="b=1-245"/>
</dbReference>
<dbReference type="PDB" id="8VFT">
    <property type="method" value="EM"/>
    <property type="resolution" value="3.30 A"/>
    <property type="chains" value="b=1-245"/>
</dbReference>
<dbReference type="PDB" id="9BDL">
    <property type="method" value="EM"/>
    <property type="resolution" value="2.80 A"/>
    <property type="chains" value="AL29=1-245"/>
</dbReference>
<dbReference type="PDB" id="9BDN">
    <property type="method" value="EM"/>
    <property type="resolution" value="3.10 A"/>
    <property type="chains" value="AL29=1-245"/>
</dbReference>
<dbReference type="PDB" id="9BDP">
    <property type="method" value="EM"/>
    <property type="resolution" value="3.70 A"/>
    <property type="chains" value="AL29=1-245"/>
</dbReference>
<dbReference type="PDB" id="9F1B">
    <property type="method" value="EM"/>
    <property type="resolution" value="3.01 A"/>
    <property type="chains" value="Bb=1-245"/>
</dbReference>
<dbReference type="PDB" id="9F1C">
    <property type="method" value="EM"/>
    <property type="resolution" value="3.78 A"/>
    <property type="chains" value="Bb=1-245"/>
</dbReference>
<dbReference type="PDB" id="9F1D">
    <property type="method" value="EM"/>
    <property type="resolution" value="3.26 A"/>
    <property type="chains" value="Bb=1-245"/>
</dbReference>
<dbReference type="PDBsum" id="3JAG"/>
<dbReference type="PDBsum" id="3JAH"/>
<dbReference type="PDBsum" id="3JAI"/>
<dbReference type="PDBsum" id="5LZS"/>
<dbReference type="PDBsum" id="5LZT"/>
<dbReference type="PDBsum" id="5LZU"/>
<dbReference type="PDBsum" id="5LZV"/>
<dbReference type="PDBsum" id="5LZW"/>
<dbReference type="PDBsum" id="5LZX"/>
<dbReference type="PDBsum" id="5LZY"/>
<dbReference type="PDBsum" id="5LZZ"/>
<dbReference type="PDBsum" id="6D90"/>
<dbReference type="PDBsum" id="6D9J"/>
<dbReference type="PDBsum" id="6FTG"/>
<dbReference type="PDBsum" id="6FTI"/>
<dbReference type="PDBsum" id="6FTJ"/>
<dbReference type="PDBsum" id="6HCF"/>
<dbReference type="PDBsum" id="6HCJ"/>
<dbReference type="PDBsum" id="6HCQ"/>
<dbReference type="PDBsum" id="6P5I"/>
<dbReference type="PDBsum" id="6P5J"/>
<dbReference type="PDBsum" id="6P5K"/>
<dbReference type="PDBsum" id="6P5N"/>
<dbReference type="PDBsum" id="6R5Q"/>
<dbReference type="PDBsum" id="6R6G"/>
<dbReference type="PDBsum" id="6R6P"/>
<dbReference type="PDBsum" id="6R7Q"/>
<dbReference type="PDBsum" id="6T59"/>
<dbReference type="PDBsum" id="6ZVK"/>
<dbReference type="PDBsum" id="7A01"/>
<dbReference type="PDBsum" id="7MDZ"/>
<dbReference type="PDBsum" id="7NFX"/>
<dbReference type="PDBsum" id="7NWG"/>
<dbReference type="PDBsum" id="7NWH"/>
<dbReference type="PDBsum" id="7O7Y"/>
<dbReference type="PDBsum" id="7O7Z"/>
<dbReference type="PDBsum" id="7O80"/>
<dbReference type="PDBsum" id="7O81"/>
<dbReference type="PDBsum" id="7OBR"/>
<dbReference type="PDBsum" id="7OYD"/>
<dbReference type="PDBsum" id="7QWQ"/>
<dbReference type="PDBsum" id="7QWR"/>
<dbReference type="PDBsum" id="7QWS"/>
<dbReference type="PDBsum" id="7TM3"/>
<dbReference type="PDBsum" id="7TUT"/>
<dbReference type="PDBsum" id="7UCJ"/>
<dbReference type="PDBsum" id="7UCK"/>
<dbReference type="PDBsum" id="7ZJW"/>
<dbReference type="PDBsum" id="7ZJX"/>
<dbReference type="PDBsum" id="8B5L"/>
<dbReference type="PDBsum" id="8B6C"/>
<dbReference type="PDBsum" id="8BHF"/>
<dbReference type="PDBsum" id="8BPO"/>
<dbReference type="PDBsum" id="8BTK"/>
<dbReference type="PDBsum" id="8P2K"/>
<dbReference type="PDBsum" id="8RJB"/>
<dbReference type="PDBsum" id="8RJC"/>
<dbReference type="PDBsum" id="8RJD"/>
<dbReference type="PDBsum" id="8SCB"/>
<dbReference type="PDBsum" id="8VFT"/>
<dbReference type="PDBsum" id="9BDL"/>
<dbReference type="PDBsum" id="9BDN"/>
<dbReference type="PDBsum" id="9BDP"/>
<dbReference type="PDBsum" id="9F1B"/>
<dbReference type="PDBsum" id="9F1C"/>
<dbReference type="PDBsum" id="9F1D"/>
<dbReference type="EMDB" id="EMD-0099"/>
<dbReference type="EMDB" id="EMD-0100"/>
<dbReference type="EMDB" id="EMD-0192"/>
<dbReference type="EMDB" id="EMD-0194"/>
<dbReference type="EMDB" id="EMD-0195"/>
<dbReference type="EMDB" id="EMD-0197"/>
<dbReference type="EMDB" id="EMD-10181"/>
<dbReference type="EMDB" id="EMD-10380"/>
<dbReference type="EMDB" id="EMD-11459"/>
<dbReference type="EMDB" id="EMD-11590"/>
<dbReference type="EMDB" id="EMD-12303"/>
<dbReference type="EMDB" id="EMD-12631"/>
<dbReference type="EMDB" id="EMD-12632"/>
<dbReference type="EMDB" id="EMD-12756"/>
<dbReference type="EMDB" id="EMD-12757"/>
<dbReference type="EMDB" id="EMD-12758"/>
<dbReference type="EMDB" id="EMD-12759"/>
<dbReference type="EMDB" id="EMD-12801"/>
<dbReference type="EMDB" id="EMD-13114"/>
<dbReference type="EMDB" id="EMD-14191"/>
<dbReference type="EMDB" id="EMD-14192"/>
<dbReference type="EMDB" id="EMD-14193"/>
<dbReference type="EMDB" id="EMD-14751"/>
<dbReference type="EMDB" id="EMD-14752"/>
<dbReference type="EMDB" id="EMD-15860"/>
<dbReference type="EMDB" id="EMD-15863"/>
<dbReference type="EMDB" id="EMD-16052"/>
<dbReference type="EMDB" id="EMD-16155"/>
<dbReference type="EMDB" id="EMD-16232"/>
<dbReference type="EMDB" id="EMD-17367"/>
<dbReference type="EMDB" id="EMD-19195"/>
<dbReference type="EMDB" id="EMD-19197"/>
<dbReference type="EMDB" id="EMD-19198"/>
<dbReference type="EMDB" id="EMD-20255"/>
<dbReference type="EMDB" id="EMD-20256"/>
<dbReference type="EMDB" id="EMD-20257"/>
<dbReference type="EMDB" id="EMD-20258"/>
<dbReference type="EMDB" id="EMD-23785"/>
<dbReference type="EMDB" id="EMD-25994"/>
<dbReference type="EMDB" id="EMD-26035"/>
<dbReference type="EMDB" id="EMD-26036"/>
<dbReference type="EMDB" id="EMD-26133"/>
<dbReference type="EMDB" id="EMD-26444"/>
<dbReference type="EMDB" id="EMD-26445"/>
<dbReference type="EMDB" id="EMD-40344"/>
<dbReference type="EMDB" id="EMD-4130"/>
<dbReference type="EMDB" id="EMD-4131"/>
<dbReference type="EMDB" id="EMD-4132"/>
<dbReference type="EMDB" id="EMD-4133"/>
<dbReference type="EMDB" id="EMD-4134"/>
<dbReference type="EMDB" id="EMD-4135"/>
<dbReference type="EMDB" id="EMD-4136"/>
<dbReference type="EMDB" id="EMD-4137"/>
<dbReference type="EMDB" id="EMD-4300"/>
<dbReference type="EMDB" id="EMD-4315"/>
<dbReference type="EMDB" id="EMD-4316"/>
<dbReference type="EMDB" id="EMD-4317"/>
<dbReference type="EMDB" id="EMD-43189"/>
<dbReference type="EMDB" id="EMD-44461"/>
<dbReference type="EMDB" id="EMD-44463"/>
<dbReference type="EMDB" id="EMD-44464"/>
<dbReference type="EMDB" id="EMD-4729"/>
<dbReference type="EMDB" id="EMD-4735"/>
<dbReference type="EMDB" id="EMD-4737"/>
<dbReference type="EMDB" id="EMD-4745"/>
<dbReference type="EMDB" id="EMD-50124"/>
<dbReference type="EMDB" id="EMD-50125"/>
<dbReference type="EMDB" id="EMD-50126"/>
<dbReference type="EMDB" id="EMD-7834"/>
<dbReference type="EMDB" id="EMD-7836"/>
<dbReference type="EMDB" id="EMD-9240"/>
<dbReference type="EMDB" id="EMD-9242"/>
<dbReference type="SMR" id="G1SGR6"/>
<dbReference type="FunCoup" id="G1SGR6">
    <property type="interactions" value="181"/>
</dbReference>
<dbReference type="IntAct" id="G1SGR6">
    <property type="interactions" value="1"/>
</dbReference>
<dbReference type="STRING" id="9986.ENSOCUP00000001786"/>
<dbReference type="PaxDb" id="9986-ENSOCUP00000001786"/>
<dbReference type="Ensembl" id="ENSOCUT00000002070.3">
    <property type="protein sequence ID" value="ENSOCUP00000001786.4"/>
    <property type="gene ID" value="ENSOCUG00000002074.3"/>
</dbReference>
<dbReference type="GeneID" id="100345588"/>
<dbReference type="KEGG" id="ocu:100345588"/>
<dbReference type="CTD" id="6159"/>
<dbReference type="eggNOG" id="KOG3504">
    <property type="taxonomic scope" value="Eukaryota"/>
</dbReference>
<dbReference type="GeneTree" id="ENSGT00390000007084"/>
<dbReference type="HOGENOM" id="CLU_1227291_0_0_1"/>
<dbReference type="InParanoid" id="G1SGR6"/>
<dbReference type="OrthoDB" id="996720at2759"/>
<dbReference type="TreeFam" id="TF313858"/>
<dbReference type="Proteomes" id="UP000001811">
    <property type="component" value="Chromosome 9"/>
</dbReference>
<dbReference type="Bgee" id="ENSOCUG00000023508">
    <property type="expression patterns" value="Expressed in skin of back and 18 other cell types or tissues"/>
</dbReference>
<dbReference type="GO" id="GO:0022625">
    <property type="term" value="C:cytosolic large ribosomal subunit"/>
    <property type="evidence" value="ECO:0007669"/>
    <property type="project" value="TreeGrafter"/>
</dbReference>
<dbReference type="GO" id="GO:0003735">
    <property type="term" value="F:structural constituent of ribosome"/>
    <property type="evidence" value="ECO:0007669"/>
    <property type="project" value="InterPro"/>
</dbReference>
<dbReference type="GO" id="GO:0002181">
    <property type="term" value="P:cytoplasmic translation"/>
    <property type="evidence" value="ECO:0007669"/>
    <property type="project" value="TreeGrafter"/>
</dbReference>
<dbReference type="Gene3D" id="6.10.140.1730">
    <property type="match status" value="1"/>
</dbReference>
<dbReference type="InterPro" id="IPR002673">
    <property type="entry name" value="Ribosomal_eL29"/>
</dbReference>
<dbReference type="PANTHER" id="PTHR12884">
    <property type="entry name" value="60S RIBOSOMAL PROTEIN L29"/>
    <property type="match status" value="1"/>
</dbReference>
<dbReference type="PANTHER" id="PTHR12884:SF18">
    <property type="entry name" value="60S RIBOSOMAL PROTEIN L29"/>
    <property type="match status" value="1"/>
</dbReference>
<dbReference type="Pfam" id="PF01779">
    <property type="entry name" value="Ribosomal_L29e"/>
    <property type="match status" value="1"/>
</dbReference>
<sequence length="245" mass="26636">MAKSKNHTTHNQSRKWHRNGIKKPRSQRYESLKGVDPKFLRNMRFAKKHNKKGLKKMQANNAKAMAARAEAIKALVKPKEVKPTIPKGVSRKLHRLAYIAHPKLGRRARARIARGLRLSRPQTKAKAKTEPQIKGKVKAQIKAQAQAQIKSKGKGKAQAETKPKAQAETKPKAQAQAKPKAQAQGKPKAQAQGKPKAQAQAKPKAQAQAKPKAQAQTKPKAQATPAAPVPAQAPPKGAQPPAKAP</sequence>
<feature type="initiator methionine" description="Removed" evidence="1">
    <location>
        <position position="1"/>
    </location>
</feature>
<feature type="chain" id="PRO_0000460119" description="Large ribosomal subunit protein eL29">
    <location>
        <begin position="2"/>
        <end position="245"/>
    </location>
</feature>
<feature type="region of interest" description="Disordered" evidence="2">
    <location>
        <begin position="1"/>
        <end position="33"/>
    </location>
</feature>
<feature type="region of interest" description="Disordered" evidence="2">
    <location>
        <begin position="114"/>
        <end position="245"/>
    </location>
</feature>
<feature type="compositionally biased region" description="Basic residues" evidence="2">
    <location>
        <begin position="1"/>
        <end position="26"/>
    </location>
</feature>
<feature type="compositionally biased region" description="Low complexity" evidence="2">
    <location>
        <begin position="134"/>
        <end position="150"/>
    </location>
</feature>
<feature type="compositionally biased region" description="Basic and acidic residues" evidence="2">
    <location>
        <begin position="157"/>
        <end position="171"/>
    </location>
</feature>
<feature type="compositionally biased region" description="Low complexity" evidence="2">
    <location>
        <begin position="172"/>
        <end position="226"/>
    </location>
</feature>
<feature type="compositionally biased region" description="Low complexity" evidence="2">
    <location>
        <begin position="234"/>
        <end position="245"/>
    </location>
</feature>
<feature type="modified residue" description="N6-methyllysine" evidence="1">
    <location>
        <position position="5"/>
    </location>
</feature>
<feature type="modified residue" description="Phosphoserine" evidence="1">
    <location>
        <position position="31"/>
    </location>
</feature>
<feature type="modified residue" description="N6-acetyllysine" evidence="1">
    <location>
        <position position="33"/>
    </location>
</feature>
<reference key="1">
    <citation type="journal article" date="2011" name="Nature">
        <title>A high-resolution map of human evolutionary constraint using 29 mammals.</title>
        <authorList>
            <person name="Lindblad-Toh K."/>
            <person name="Garber M."/>
            <person name="Zuk O."/>
            <person name="Lin M.F."/>
            <person name="Parker B.J."/>
            <person name="Washietl S."/>
            <person name="Kheradpour P."/>
            <person name="Ernst J."/>
            <person name="Jordan G."/>
            <person name="Mauceli E."/>
            <person name="Ward L.D."/>
            <person name="Lowe C.B."/>
            <person name="Holloway A.K."/>
            <person name="Clamp M."/>
            <person name="Gnerre S."/>
            <person name="Alfoldi J."/>
            <person name="Beal K."/>
            <person name="Chang J."/>
            <person name="Clawson H."/>
            <person name="Cuff J."/>
            <person name="Di Palma F."/>
            <person name="Fitzgerald S."/>
            <person name="Flicek P."/>
            <person name="Guttman M."/>
            <person name="Hubisz M.J."/>
            <person name="Jaffe D.B."/>
            <person name="Jungreis I."/>
            <person name="Kent W.J."/>
            <person name="Kostka D."/>
            <person name="Lara M."/>
            <person name="Martins A.L."/>
            <person name="Massingham T."/>
            <person name="Moltke I."/>
            <person name="Raney B.J."/>
            <person name="Rasmussen M.D."/>
            <person name="Robinson J."/>
            <person name="Stark A."/>
            <person name="Vilella A.J."/>
            <person name="Wen J."/>
            <person name="Xie X."/>
            <person name="Zody M.C."/>
            <person name="Baldwin J."/>
            <person name="Bloom T."/>
            <person name="Chin C.W."/>
            <person name="Heiman D."/>
            <person name="Nicol R."/>
            <person name="Nusbaum C."/>
            <person name="Young S."/>
            <person name="Wilkinson J."/>
            <person name="Worley K.C."/>
            <person name="Kovar C.L."/>
            <person name="Muzny D.M."/>
            <person name="Gibbs R.A."/>
            <person name="Cree A."/>
            <person name="Dihn H.H."/>
            <person name="Fowler G."/>
            <person name="Jhangiani S."/>
            <person name="Joshi V."/>
            <person name="Lee S."/>
            <person name="Lewis L.R."/>
            <person name="Nazareth L.V."/>
            <person name="Okwuonu G."/>
            <person name="Santibanez J."/>
            <person name="Warren W.C."/>
            <person name="Mardis E.R."/>
            <person name="Weinstock G.M."/>
            <person name="Wilson R.K."/>
            <person name="Delehaunty K."/>
            <person name="Dooling D."/>
            <person name="Fronik C."/>
            <person name="Fulton L."/>
            <person name="Fulton B."/>
            <person name="Graves T."/>
            <person name="Minx P."/>
            <person name="Sodergren E."/>
            <person name="Birney E."/>
            <person name="Margulies E.H."/>
            <person name="Herrero J."/>
            <person name="Green E.D."/>
            <person name="Haussler D."/>
            <person name="Siepel A."/>
            <person name="Goldman N."/>
            <person name="Pollard K.S."/>
            <person name="Pedersen J.S."/>
            <person name="Lander E.S."/>
            <person name="Kellis M."/>
        </authorList>
    </citation>
    <scope>NUCLEOTIDE SEQUENCE [LARGE SCALE GENOMIC DNA]</scope>
    <source>
        <strain>Thorbecke</strain>
    </source>
</reference>
<reference evidence="14 15" key="2">
    <citation type="journal article" date="2015" name="Nature">
        <title>Structural basis for stop codon recognition in eukaryotes.</title>
        <authorList>
            <person name="Brown A."/>
            <person name="Shao S."/>
            <person name="Murray J."/>
            <person name="Hegde R.S."/>
            <person name="Ramakrishnan V."/>
        </authorList>
    </citation>
    <scope>STRUCTURE BY ELECTRON MICROSCOPY (3.45 ANGSTROMS) OF 2-76 OF RIBOSOME</scope>
    <scope>FUNCTION</scope>
    <scope>SUBCELLULAR LOCATION</scope>
    <scope>SUBUNIT</scope>
</reference>
<reference evidence="16 17" key="3">
    <citation type="journal article" date="2016" name="Cell">
        <title>Decoding mammalian ribosome-mRNA states by translational GTPase complexes.</title>
        <authorList>
            <person name="Shao S."/>
            <person name="Murray J."/>
            <person name="Brown A."/>
            <person name="Taunton J."/>
            <person name="Ramakrishnan V."/>
            <person name="Hegde R.S."/>
        </authorList>
    </citation>
    <scope>STRUCTURE BY ELECTRON MICROSCOPY (3.31 ANGSTROMS) OF RIBOSOME</scope>
    <scope>FUNCTION</scope>
    <scope>SUBUNIT</scope>
    <scope>SUBCELLULAR LOCATION</scope>
</reference>
<reference evidence="18 19" key="4">
    <citation type="journal article" date="2018" name="Elife">
        <title>Dual tRNA mimicry in the Cricket paralysis virus IRES uncovers an unexpected similarity with the Hepatitis C Virus IRES.</title>
        <authorList>
            <person name="Pisareva V.P."/>
            <person name="Pisarev A.V."/>
            <person name="Fernandez I.S."/>
        </authorList>
    </citation>
    <scope>STRUCTURE BY ELECTRON MICROSCOPY (3.20 ANGSTROMS) OF RIBOSOME</scope>
    <scope>SUBUNIT</scope>
    <scope>SUBCELLULAR LOCATION</scope>
</reference>
<reference evidence="20 21" key="5">
    <citation type="journal article" date="2018" name="Mol. Cell">
        <title>ZNF598 is a quality control sensor of collided ribosomes.</title>
        <authorList>
            <person name="Juszkiewicz S."/>
            <person name="Chandrasekaran V."/>
            <person name="Lin Z."/>
            <person name="Kraatz S."/>
            <person name="Ramakrishnan V."/>
            <person name="Hegde R.S."/>
        </authorList>
    </citation>
    <scope>STRUCTURE BY ELECTRON MICROSCOPY (3.80 ANGSTROMS) OF RIBOSOME</scope>
    <scope>SUBUNIT</scope>
    <scope>SUBCELLULAR LOCATION</scope>
</reference>
<reference evidence="24 25" key="6">
    <citation type="journal article" date="2019" name="Elife">
        <title>Structural and mutational analysis of the ribosome-arresting human XBP1u.</title>
        <authorList>
            <person name="Shanmuganathan V."/>
            <person name="Schiller N."/>
            <person name="Magoulopoulou A."/>
            <person name="Cheng J."/>
            <person name="Braunger K."/>
            <person name="Cymer F."/>
            <person name="Berninghausen O."/>
            <person name="Beatrix B."/>
            <person name="Kohno K."/>
            <person name="von Heijne G."/>
            <person name="Beckmann R."/>
        </authorList>
    </citation>
    <scope>STRUCTURE BY ELECTRON MICROSCOPY (3.00 ANGSTROMS) OF RIBOSOME</scope>
    <scope>SUBCELLULAR LOCATION</scope>
    <scope>SUBUNIT</scope>
</reference>
<reference evidence="22 23" key="7">
    <citation type="journal article" date="2019" name="EMBO J.">
        <title>The Israeli acute paralysis virus IRES captures host ribosomes by mimicking a ribosomal state with hybrid tRNAs.</title>
        <authorList>
            <person name="Acosta-Reyes F."/>
            <person name="Neupane R."/>
            <person name="Frank J."/>
            <person name="Fernandez I.S."/>
        </authorList>
    </citation>
    <scope>STRUCTURE BY ELECTRON MICROSCOPY (3.10 ANGSTROMS) OF RIBOSOME</scope>
    <scope>SUBUNIT</scope>
    <scope>SUBCELLULAR LOCATION</scope>
</reference>
<reference evidence="26 27" key="8">
    <citation type="journal article" date="2020" name="Cell Rep.">
        <title>The Halastavi arva virus intergenic region IRES promotes translation by the simplest possible initiation mechanism.</title>
        <authorList>
            <person name="Abaeva I.S."/>
            <person name="Vicens Q."/>
            <person name="Bochler A."/>
            <person name="Soufari H."/>
            <person name="Simonetti A."/>
            <person name="Pestova T.V."/>
            <person name="Hashem Y."/>
            <person name="Hellen C.U.T."/>
        </authorList>
    </citation>
    <scope>STRUCTURE BY ELECTRON MICROSCOPY (3.49 ANGSTROMS) OF RIBOSOME</scope>
    <scope>SUBCELLULAR LOCATION</scope>
    <scope>SUBUNIT</scope>
</reference>
<reference evidence="29 30" key="9">
    <citation type="journal article" date="2022" name="Mol. Cell">
        <title>Direct epitranscriptomic regulation of mammalian translation initiation through N4-acetylcytidine.</title>
        <authorList>
            <person name="Arango D."/>
            <person name="Sturgill D."/>
            <person name="Yang R."/>
            <person name="Kanai T."/>
            <person name="Bauer P."/>
            <person name="Roy J."/>
            <person name="Wang Z."/>
            <person name="Hosogane M."/>
            <person name="Schiffers S."/>
            <person name="Oberdoerffer S."/>
        </authorList>
    </citation>
    <scope>STRUCTURE BY ELECTRON MICROSCOPY (2.80 ANGSTROMS) OF RIBOSOME</scope>
    <scope>SUBCELLULAR LOCATION</scope>
    <scope>SUBUNIT</scope>
</reference>
<reference evidence="31 32" key="10">
    <citation type="journal article" date="2022" name="Science">
        <title>Structure of the mammalian ribosome as it decodes the selenocysteine UGA codon.</title>
        <authorList>
            <person name="Hilal T."/>
            <person name="Killam B.Y."/>
            <person name="Grozdanovic M."/>
            <person name="Dobosz-Bartoszek M."/>
            <person name="Loerke J."/>
            <person name="Buerger J."/>
            <person name="Mielke T."/>
            <person name="Copeland P.R."/>
            <person name="Simonovic M."/>
            <person name="Spahn C.M.T."/>
        </authorList>
    </citation>
    <scope>STRUCTURE BY ELECTRON MICROSCOPY (2.80 ANGSTROMS) OF RIBOSOME</scope>
    <scope>SUBCELLULAR LOCATION</scope>
    <scope>SUBUNIT</scope>
</reference>
<reference evidence="28" key="11">
    <citation type="journal article" date="2023" name="Nature">
        <title>A molecular network of conserved factors keeps ribosomes dormant in the egg.</title>
        <authorList>
            <person name="Leesch F."/>
            <person name="Lorenzo-Orts L."/>
            <person name="Pribitzer C."/>
            <person name="Grishkovskaya I."/>
            <person name="Roehsner J."/>
            <person name="Chugunova A."/>
            <person name="Matzinger M."/>
            <person name="Roitinger E."/>
            <person name="Belacic K."/>
            <person name="Kandolf S."/>
            <person name="Lin T.Y."/>
            <person name="Mechtler K."/>
            <person name="Meinhart A."/>
            <person name="Haselbach D."/>
            <person name="Pauli A."/>
        </authorList>
    </citation>
    <scope>STRUCTURE BY ELECTRON MICROSCOPY (2.30 ANGSTROMS) OF RIBOSOME</scope>
    <scope>SUBCELLULAR LOCATION</scope>
    <scope>SUBUNIT</scope>
</reference>
<evidence type="ECO:0000250" key="1">
    <source>
        <dbReference type="UniProtKB" id="P47914"/>
    </source>
</evidence>
<evidence type="ECO:0000256" key="2">
    <source>
        <dbReference type="SAM" id="MobiDB-lite"/>
    </source>
</evidence>
<evidence type="ECO:0000269" key="3">
    <source>
    </source>
</evidence>
<evidence type="ECO:0000269" key="4">
    <source>
    </source>
</evidence>
<evidence type="ECO:0000269" key="5">
    <source>
    </source>
</evidence>
<evidence type="ECO:0000269" key="6">
    <source>
    </source>
</evidence>
<evidence type="ECO:0000269" key="7">
    <source>
    </source>
</evidence>
<evidence type="ECO:0000269" key="8">
    <source>
    </source>
</evidence>
<evidence type="ECO:0000269" key="9">
    <source>
    </source>
</evidence>
<evidence type="ECO:0000269" key="10">
    <source>
    </source>
</evidence>
<evidence type="ECO:0000269" key="11">
    <source>
    </source>
</evidence>
<evidence type="ECO:0000269" key="12">
    <source>
    </source>
</evidence>
<evidence type="ECO:0000305" key="13"/>
<evidence type="ECO:0007744" key="14">
    <source>
        <dbReference type="PDB" id="3JAG"/>
    </source>
</evidence>
<evidence type="ECO:0007744" key="15">
    <source>
        <dbReference type="PDB" id="3JAH"/>
    </source>
</evidence>
<evidence type="ECO:0007744" key="16">
    <source>
        <dbReference type="PDB" id="5LZS"/>
    </source>
</evidence>
<evidence type="ECO:0007744" key="17">
    <source>
        <dbReference type="PDB" id="5LZT"/>
    </source>
</evidence>
<evidence type="ECO:0007744" key="18">
    <source>
        <dbReference type="PDB" id="6D90"/>
    </source>
</evidence>
<evidence type="ECO:0007744" key="19">
    <source>
        <dbReference type="PDB" id="6D9J"/>
    </source>
</evidence>
<evidence type="ECO:0007744" key="20">
    <source>
        <dbReference type="PDB" id="6HCF"/>
    </source>
</evidence>
<evidence type="ECO:0007744" key="21">
    <source>
        <dbReference type="PDB" id="6HCJ"/>
    </source>
</evidence>
<evidence type="ECO:0007744" key="22">
    <source>
        <dbReference type="PDB" id="6P5I"/>
    </source>
</evidence>
<evidence type="ECO:0007744" key="23">
    <source>
        <dbReference type="PDB" id="6P5J"/>
    </source>
</evidence>
<evidence type="ECO:0007744" key="24">
    <source>
        <dbReference type="PDB" id="6R5Q"/>
    </source>
</evidence>
<evidence type="ECO:0007744" key="25">
    <source>
        <dbReference type="PDB" id="6R6G"/>
    </source>
</evidence>
<evidence type="ECO:0007744" key="26">
    <source>
        <dbReference type="PDB" id="6ZVK"/>
    </source>
</evidence>
<evidence type="ECO:0007744" key="27">
    <source>
        <dbReference type="PDB" id="7A01"/>
    </source>
</evidence>
<evidence type="ECO:0007744" key="28">
    <source>
        <dbReference type="PDB" id="7OYD"/>
    </source>
</evidence>
<evidence type="ECO:0007744" key="29">
    <source>
        <dbReference type="PDB" id="7UCJ"/>
    </source>
</evidence>
<evidence type="ECO:0007744" key="30">
    <source>
        <dbReference type="PDB" id="7UCK"/>
    </source>
</evidence>
<evidence type="ECO:0007744" key="31">
    <source>
        <dbReference type="PDB" id="7ZJW"/>
    </source>
</evidence>
<evidence type="ECO:0007744" key="32">
    <source>
        <dbReference type="PDB" id="7ZJX"/>
    </source>
</evidence>
<proteinExistence type="evidence at protein level"/>
<name>RL29_RABIT</name>
<keyword id="KW-0002">3D-structure</keyword>
<keyword id="KW-0007">Acetylation</keyword>
<keyword id="KW-0963">Cytoplasm</keyword>
<keyword id="KW-0488">Methylation</keyword>
<keyword id="KW-0597">Phosphoprotein</keyword>
<keyword id="KW-1185">Reference proteome</keyword>
<keyword id="KW-0677">Repeat</keyword>
<keyword id="KW-0687">Ribonucleoprotein</keyword>
<keyword id="KW-0689">Ribosomal protein</keyword>
<accession>G1SGR6</accession>
<accession>G1TN82</accession>